<name>MNME_ALKMQ</name>
<keyword id="KW-0963">Cytoplasm</keyword>
<keyword id="KW-0342">GTP-binding</keyword>
<keyword id="KW-0378">Hydrolase</keyword>
<keyword id="KW-0460">Magnesium</keyword>
<keyword id="KW-0479">Metal-binding</keyword>
<keyword id="KW-0547">Nucleotide-binding</keyword>
<keyword id="KW-0630">Potassium</keyword>
<keyword id="KW-1185">Reference proteome</keyword>
<keyword id="KW-0819">tRNA processing</keyword>
<proteinExistence type="inferred from homology"/>
<accession>A6TXE5</accession>
<comment type="function">
    <text evidence="1">Exhibits a very high intrinsic GTPase hydrolysis rate. Involved in the addition of a carboxymethylaminomethyl (cmnm) group at the wobble position (U34) of certain tRNAs, forming tRNA-cmnm(5)s(2)U34.</text>
</comment>
<comment type="cofactor">
    <cofactor evidence="1">
        <name>K(+)</name>
        <dbReference type="ChEBI" id="CHEBI:29103"/>
    </cofactor>
    <text evidence="1">Binds 1 potassium ion per subunit.</text>
</comment>
<comment type="subunit">
    <text evidence="1">Homodimer. Heterotetramer of two MnmE and two MnmG subunits.</text>
</comment>
<comment type="subcellular location">
    <subcellularLocation>
        <location evidence="1">Cytoplasm</location>
    </subcellularLocation>
</comment>
<comment type="similarity">
    <text evidence="1">Belongs to the TRAFAC class TrmE-Era-EngA-EngB-Septin-like GTPase superfamily. TrmE GTPase family.</text>
</comment>
<evidence type="ECO:0000255" key="1">
    <source>
        <dbReference type="HAMAP-Rule" id="MF_00379"/>
    </source>
</evidence>
<feature type="chain" id="PRO_1000060033" description="tRNA modification GTPase MnmE">
    <location>
        <begin position="1"/>
        <end position="461"/>
    </location>
</feature>
<feature type="domain" description="TrmE-type G">
    <location>
        <begin position="223"/>
        <end position="382"/>
    </location>
</feature>
<feature type="binding site" evidence="1">
    <location>
        <position position="23"/>
    </location>
    <ligand>
        <name>(6S)-5-formyl-5,6,7,8-tetrahydrofolate</name>
        <dbReference type="ChEBI" id="CHEBI:57457"/>
    </ligand>
</feature>
<feature type="binding site" evidence="1">
    <location>
        <position position="88"/>
    </location>
    <ligand>
        <name>(6S)-5-formyl-5,6,7,8-tetrahydrofolate</name>
        <dbReference type="ChEBI" id="CHEBI:57457"/>
    </ligand>
</feature>
<feature type="binding site" evidence="1">
    <location>
        <position position="127"/>
    </location>
    <ligand>
        <name>(6S)-5-formyl-5,6,7,8-tetrahydrofolate</name>
        <dbReference type="ChEBI" id="CHEBI:57457"/>
    </ligand>
</feature>
<feature type="binding site" evidence="1">
    <location>
        <begin position="233"/>
        <end position="238"/>
    </location>
    <ligand>
        <name>GTP</name>
        <dbReference type="ChEBI" id="CHEBI:37565"/>
    </ligand>
</feature>
<feature type="binding site" evidence="1">
    <location>
        <position position="233"/>
    </location>
    <ligand>
        <name>K(+)</name>
        <dbReference type="ChEBI" id="CHEBI:29103"/>
    </ligand>
</feature>
<feature type="binding site" evidence="1">
    <location>
        <position position="237"/>
    </location>
    <ligand>
        <name>Mg(2+)</name>
        <dbReference type="ChEBI" id="CHEBI:18420"/>
    </ligand>
</feature>
<feature type="binding site" evidence="1">
    <location>
        <begin position="252"/>
        <end position="258"/>
    </location>
    <ligand>
        <name>GTP</name>
        <dbReference type="ChEBI" id="CHEBI:37565"/>
    </ligand>
</feature>
<feature type="binding site" evidence="1">
    <location>
        <position position="252"/>
    </location>
    <ligand>
        <name>K(+)</name>
        <dbReference type="ChEBI" id="CHEBI:29103"/>
    </ligand>
</feature>
<feature type="binding site" evidence="1">
    <location>
        <position position="254"/>
    </location>
    <ligand>
        <name>K(+)</name>
        <dbReference type="ChEBI" id="CHEBI:29103"/>
    </ligand>
</feature>
<feature type="binding site" evidence="1">
    <location>
        <position position="257"/>
    </location>
    <ligand>
        <name>K(+)</name>
        <dbReference type="ChEBI" id="CHEBI:29103"/>
    </ligand>
</feature>
<feature type="binding site" evidence="1">
    <location>
        <position position="258"/>
    </location>
    <ligand>
        <name>Mg(2+)</name>
        <dbReference type="ChEBI" id="CHEBI:18420"/>
    </ligand>
</feature>
<feature type="binding site" evidence="1">
    <location>
        <begin position="277"/>
        <end position="280"/>
    </location>
    <ligand>
        <name>GTP</name>
        <dbReference type="ChEBI" id="CHEBI:37565"/>
    </ligand>
</feature>
<feature type="binding site" evidence="1">
    <location>
        <position position="461"/>
    </location>
    <ligand>
        <name>(6S)-5-formyl-5,6,7,8-tetrahydrofolate</name>
        <dbReference type="ChEBI" id="CHEBI:57457"/>
    </ligand>
</feature>
<organism>
    <name type="scientific">Alkaliphilus metalliredigens (strain QYMF)</name>
    <dbReference type="NCBI Taxonomy" id="293826"/>
    <lineage>
        <taxon>Bacteria</taxon>
        <taxon>Bacillati</taxon>
        <taxon>Bacillota</taxon>
        <taxon>Clostridia</taxon>
        <taxon>Peptostreptococcales</taxon>
        <taxon>Natronincolaceae</taxon>
        <taxon>Alkaliphilus</taxon>
    </lineage>
</organism>
<dbReference type="EC" id="3.6.-.-" evidence="1"/>
<dbReference type="EMBL" id="CP000724">
    <property type="protein sequence ID" value="ABR50863.1"/>
    <property type="molecule type" value="Genomic_DNA"/>
</dbReference>
<dbReference type="RefSeq" id="WP_012065748.1">
    <property type="nucleotide sequence ID" value="NC_009633.1"/>
</dbReference>
<dbReference type="SMR" id="A6TXE5"/>
<dbReference type="STRING" id="293826.Amet_4797"/>
<dbReference type="KEGG" id="amt:Amet_4797"/>
<dbReference type="eggNOG" id="COG0486">
    <property type="taxonomic scope" value="Bacteria"/>
</dbReference>
<dbReference type="HOGENOM" id="CLU_019624_4_1_9"/>
<dbReference type="OrthoDB" id="9805918at2"/>
<dbReference type="Proteomes" id="UP000001572">
    <property type="component" value="Chromosome"/>
</dbReference>
<dbReference type="GO" id="GO:0005829">
    <property type="term" value="C:cytosol"/>
    <property type="evidence" value="ECO:0007669"/>
    <property type="project" value="TreeGrafter"/>
</dbReference>
<dbReference type="GO" id="GO:0005525">
    <property type="term" value="F:GTP binding"/>
    <property type="evidence" value="ECO:0007669"/>
    <property type="project" value="UniProtKB-UniRule"/>
</dbReference>
<dbReference type="GO" id="GO:0003924">
    <property type="term" value="F:GTPase activity"/>
    <property type="evidence" value="ECO:0007669"/>
    <property type="project" value="UniProtKB-UniRule"/>
</dbReference>
<dbReference type="GO" id="GO:0046872">
    <property type="term" value="F:metal ion binding"/>
    <property type="evidence" value="ECO:0007669"/>
    <property type="project" value="UniProtKB-KW"/>
</dbReference>
<dbReference type="GO" id="GO:0030488">
    <property type="term" value="P:tRNA methylation"/>
    <property type="evidence" value="ECO:0007669"/>
    <property type="project" value="TreeGrafter"/>
</dbReference>
<dbReference type="GO" id="GO:0002098">
    <property type="term" value="P:tRNA wobble uridine modification"/>
    <property type="evidence" value="ECO:0007669"/>
    <property type="project" value="TreeGrafter"/>
</dbReference>
<dbReference type="CDD" id="cd04164">
    <property type="entry name" value="trmE"/>
    <property type="match status" value="1"/>
</dbReference>
<dbReference type="CDD" id="cd14858">
    <property type="entry name" value="TrmE_N"/>
    <property type="match status" value="1"/>
</dbReference>
<dbReference type="FunFam" id="3.30.1360.120:FF:000003">
    <property type="entry name" value="tRNA modification GTPase MnmE"/>
    <property type="match status" value="1"/>
</dbReference>
<dbReference type="FunFam" id="3.40.50.300:FF:000494">
    <property type="entry name" value="tRNA modification GTPase MnmE"/>
    <property type="match status" value="1"/>
</dbReference>
<dbReference type="Gene3D" id="3.40.50.300">
    <property type="entry name" value="P-loop containing nucleotide triphosphate hydrolases"/>
    <property type="match status" value="1"/>
</dbReference>
<dbReference type="Gene3D" id="3.30.1360.120">
    <property type="entry name" value="Probable tRNA modification gtpase trme, domain 1"/>
    <property type="match status" value="1"/>
</dbReference>
<dbReference type="Gene3D" id="1.20.120.430">
    <property type="entry name" value="tRNA modification GTPase MnmE domain 2"/>
    <property type="match status" value="1"/>
</dbReference>
<dbReference type="HAMAP" id="MF_00379">
    <property type="entry name" value="GTPase_MnmE"/>
    <property type="match status" value="1"/>
</dbReference>
<dbReference type="InterPro" id="IPR031168">
    <property type="entry name" value="G_TrmE"/>
</dbReference>
<dbReference type="InterPro" id="IPR006073">
    <property type="entry name" value="GTP-bd"/>
</dbReference>
<dbReference type="InterPro" id="IPR018948">
    <property type="entry name" value="GTP-bd_TrmE_N"/>
</dbReference>
<dbReference type="InterPro" id="IPR004520">
    <property type="entry name" value="GTPase_MnmE"/>
</dbReference>
<dbReference type="InterPro" id="IPR027368">
    <property type="entry name" value="MnmE_dom2"/>
</dbReference>
<dbReference type="InterPro" id="IPR025867">
    <property type="entry name" value="MnmE_helical"/>
</dbReference>
<dbReference type="InterPro" id="IPR027417">
    <property type="entry name" value="P-loop_NTPase"/>
</dbReference>
<dbReference type="InterPro" id="IPR005225">
    <property type="entry name" value="Small_GTP-bd"/>
</dbReference>
<dbReference type="InterPro" id="IPR027266">
    <property type="entry name" value="TrmE/GcvT_dom1"/>
</dbReference>
<dbReference type="NCBIfam" id="TIGR00450">
    <property type="entry name" value="mnmE_trmE_thdF"/>
    <property type="match status" value="1"/>
</dbReference>
<dbReference type="NCBIfam" id="NF003661">
    <property type="entry name" value="PRK05291.1-3"/>
    <property type="match status" value="1"/>
</dbReference>
<dbReference type="NCBIfam" id="TIGR00231">
    <property type="entry name" value="small_GTP"/>
    <property type="match status" value="1"/>
</dbReference>
<dbReference type="PANTHER" id="PTHR42714">
    <property type="entry name" value="TRNA MODIFICATION GTPASE GTPBP3"/>
    <property type="match status" value="1"/>
</dbReference>
<dbReference type="PANTHER" id="PTHR42714:SF2">
    <property type="entry name" value="TRNA MODIFICATION GTPASE GTPBP3, MITOCHONDRIAL"/>
    <property type="match status" value="1"/>
</dbReference>
<dbReference type="Pfam" id="PF01926">
    <property type="entry name" value="MMR_HSR1"/>
    <property type="match status" value="1"/>
</dbReference>
<dbReference type="Pfam" id="PF12631">
    <property type="entry name" value="MnmE_helical"/>
    <property type="match status" value="1"/>
</dbReference>
<dbReference type="Pfam" id="PF10396">
    <property type="entry name" value="TrmE_N"/>
    <property type="match status" value="1"/>
</dbReference>
<dbReference type="SUPFAM" id="SSF52540">
    <property type="entry name" value="P-loop containing nucleoside triphosphate hydrolases"/>
    <property type="match status" value="1"/>
</dbReference>
<dbReference type="SUPFAM" id="SSF116878">
    <property type="entry name" value="TrmE connector domain"/>
    <property type="match status" value="1"/>
</dbReference>
<dbReference type="PROSITE" id="PS51709">
    <property type="entry name" value="G_TRME"/>
    <property type="match status" value="1"/>
</dbReference>
<protein>
    <recommendedName>
        <fullName evidence="1">tRNA modification GTPase MnmE</fullName>
        <ecNumber evidence="1">3.6.-.-</ecNumber>
    </recommendedName>
</protein>
<reference key="1">
    <citation type="journal article" date="2016" name="Genome Announc.">
        <title>Complete genome sequence of Alkaliphilus metalliredigens strain QYMF, an alkaliphilic and metal-reducing bacterium isolated from borax-contaminated leachate ponds.</title>
        <authorList>
            <person name="Hwang C."/>
            <person name="Copeland A."/>
            <person name="Lucas S."/>
            <person name="Lapidus A."/>
            <person name="Barry K."/>
            <person name="Detter J.C."/>
            <person name="Glavina Del Rio T."/>
            <person name="Hammon N."/>
            <person name="Israni S."/>
            <person name="Dalin E."/>
            <person name="Tice H."/>
            <person name="Pitluck S."/>
            <person name="Chertkov O."/>
            <person name="Brettin T."/>
            <person name="Bruce D."/>
            <person name="Han C."/>
            <person name="Schmutz J."/>
            <person name="Larimer F."/>
            <person name="Land M.L."/>
            <person name="Hauser L."/>
            <person name="Kyrpides N."/>
            <person name="Mikhailova N."/>
            <person name="Ye Q."/>
            <person name="Zhou J."/>
            <person name="Richardson P."/>
            <person name="Fields M.W."/>
        </authorList>
    </citation>
    <scope>NUCLEOTIDE SEQUENCE [LARGE SCALE GENOMIC DNA]</scope>
    <source>
        <strain>QYMF</strain>
    </source>
</reference>
<sequence>MFLDDTIAAIATAHGEAGIGIVRISGEKALHIIDQVFQSKQGKKLKDISPRRITYGHIIDTERNERIDEVLVSYMKGPHTYTTEDVVEINCHGGMIPVKRILELILRKGARAADAGEFTKRAFLNGRIDLAQAEAVMDLVSAKTDMGFDVALNQLEGSLSKRVKKVKDELLDMLAHIEVSIDFSDEDVDEVTLDLLLKQSMEIEKKIKVLLETADTGKILREGLNTVIVGKPNVGKSSLLNALLKESRAIVTEVPGTTRDAIEEHFNIRGIPLNLIDTAGIRETEDIVEKIGVERSKAFFNKADLIILMLDASRELTPEDLQIMELVKSKKALILVNKTDLTSQIDYDRIIEIVGEKKVIKISLIEESGLEEVEEALVEIVYKGETRAKDSLLVTNVRHKNALERALESLTDGVQAIKQKMPLDFVEVDVKNAWDALGEITGDTVGEDLLDHIFQNFCIGK</sequence>
<gene>
    <name evidence="1" type="primary">mnmE</name>
    <name evidence="1" type="synonym">trmE</name>
    <name type="ordered locus">Amet_4797</name>
</gene>